<reference key="1">
    <citation type="journal article" date="1999" name="Biochem. Biophys. Res. Commun.">
        <title>Molecular cloning and sequence analysis of aggretin, a collagen-like platelet aggregation inducer.</title>
        <authorList>
            <person name="Chung C.-H."/>
            <person name="Au L.-C."/>
            <person name="Huang T.-F."/>
        </authorList>
    </citation>
    <scope>NUCLEOTIDE SEQUENCE [MRNA]</scope>
    <scope>PROTEIN SEQUENCE OF 1-22</scope>
    <source>
        <tissue>Venom</tissue>
        <tissue>Venom gland</tissue>
    </source>
</reference>
<reference key="2">
    <citation type="journal article" date="2001" name="J. Biol. Chem.">
        <title>Aggretin, a heterodimeric C-type lectin from Calloselasma rhodostoma (malayan pit viper), stimulates platelets by binding to alpha 2beta 1 integrin and glycoprotein Ib, activating Syk and phospholipase Cgamma 2, but does not involve the glycoprotein VI/Fc receptor gamma chain collagen receptor.</title>
        <authorList>
            <person name="Navdaev A."/>
            <person name="Clemetson J.M."/>
            <person name="Polgar J."/>
            <person name="Kehrel B.E."/>
            <person name="Glauner M."/>
            <person name="Magnenat E."/>
            <person name="Wells T.N.C."/>
            <person name="Clemetson K.J."/>
        </authorList>
    </citation>
    <scope>PROTEIN SEQUENCE OF 1-30</scope>
    <scope>FUNCTION</scope>
</reference>
<reference key="3">
    <citation type="journal article" date="1998" name="Biochem. Biophys. Res. Commun.">
        <title>Rhodocytin, a functional novel platelet agonist belonging to the heterodimeric C-type lectin family, induces platelet aggregation independently of glycoprotein Ib.</title>
        <authorList>
            <person name="Shin Y."/>
            <person name="Morita T."/>
        </authorList>
    </citation>
    <scope>PROTEIN SEQUENCE OF 1-22</scope>
    <scope>FUNCTION</scope>
    <scope>SUBUNIT</scope>
    <source>
        <tissue>Venom</tissue>
    </source>
</reference>
<reference key="4">
    <citation type="journal article" date="2001" name="FEBS Lett.">
        <title>A novel dimer of a C-type lectin-like heterodimer from the venom of Calloselasma rhodostoma (Malayan pit viper).</title>
        <authorList>
            <person name="Wang R."/>
            <person name="Kong C."/>
            <person name="Kolatkar P."/>
            <person name="Chung M.C."/>
        </authorList>
    </citation>
    <scope>PROTEIN SEQUENCE OF 1-22</scope>
    <scope>FUNCTION</scope>
    <scope>SUBUNIT</scope>
    <source>
        <tissue>Venom</tissue>
    </source>
</reference>
<reference key="5">
    <citation type="journal article" date="1995" name="Biochem. J.">
        <title>Aggretin, a novel platelet-aggregation inducer from snake (Calloselasma rhodostoma) venom, activates phospholipase C by acting as a glycoprotein Ia/IIa agonist.</title>
        <authorList>
            <person name="Huang T.-F."/>
            <person name="Liu C.-Z."/>
            <person name="Yang S.-H."/>
        </authorList>
    </citation>
    <scope>FUNCTION</scope>
    <source>
        <tissue>Venom</tissue>
    </source>
</reference>
<reference key="6">
    <citation type="journal article" date="2001" name="Biochem. Biophys. Res. Commun.">
        <title>Aggretin, a C-type lectin protein, induces platelet aggregation via integrin alpha(2)beta(1) and GPIb in a phosphatidylinositol 3-kinase independent pathway.</title>
        <authorList>
            <person name="Chung C.-H."/>
            <person name="Peng H.-C."/>
            <person name="Huang T.-F."/>
        </authorList>
    </citation>
    <scope>FUNCTION</scope>
</reference>
<reference key="7">
    <citation type="journal article" date="2001" name="J. Biol. Chem.">
        <title>Rhodocytin (aggretin) activates platelets lacking alpha(2)beta(1) integrin, glycoprotein VI, and the ligand-binding domain of glycoprotein Ibalpha.</title>
        <authorList>
            <person name="Bergmeier W."/>
            <person name="Bouvard D."/>
            <person name="Eble J.A."/>
            <person name="Mokhtari-Nejad R."/>
            <person name="Schulte V."/>
            <person name="Zirngibl H."/>
            <person name="Brakebusch C."/>
            <person name="Fassler R."/>
            <person name="Nieswandt B."/>
        </authorList>
    </citation>
    <scope>FUNCTION</scope>
</reference>
<reference key="8">
    <citation type="journal article" date="2004" name="Blood">
        <title>Aggretin, a snake venom-derived endothelial integrin alpha 2 beta 1 agonist, induces angiogenesis via expression of vascular endothelial growth factor.</title>
        <authorList>
            <person name="Chung C.-H."/>
            <person name="Wu W.-B."/>
            <person name="Huang T.-F."/>
        </authorList>
    </citation>
    <scope>FUNCTION</scope>
</reference>
<reference key="9">
    <citation type="journal article" date="2006" name="Blood">
        <title>A novel Syk-dependent mechanism of platelet activation by the C-type lectin receptor CLEC-2.</title>
        <authorList>
            <person name="Suzuki-Inoue K."/>
            <person name="Fuller G.L.J."/>
            <person name="Garcia A."/>
            <person name="Eble J.A."/>
            <person name="Poehlmann S."/>
            <person name="Inoue O."/>
            <person name="Gartner T.K."/>
            <person name="Hughan S.C."/>
            <person name="Pearce A.C."/>
            <person name="Laing G.D."/>
            <person name="Theakston R.D.G."/>
            <person name="Schweighoffer E."/>
            <person name="Zitzmann N."/>
            <person name="Morita T."/>
            <person name="Tybulewicz V.L.J."/>
            <person name="Ozaki Y."/>
            <person name="Watson S.P."/>
        </authorList>
    </citation>
    <scope>FUNCTION</scope>
</reference>
<reference key="10">
    <citation type="journal article" date="2008" name="Biochemistry">
        <title>The crystal structure of the platelet activator aggretin reveals a novel (alphabeta)2 dimeric structure.</title>
        <authorList>
            <person name="Hooley E."/>
            <person name="Papagrigoriou E."/>
            <person name="Navdaev A."/>
            <person name="Pandey A.V."/>
            <person name="Clemetson J.M."/>
            <person name="Clemetson K.J."/>
            <person name="Emsley J."/>
        </authorList>
    </citation>
    <scope>X-RAY CRYSTALLOGRAPHY (1.7 ANGSTROMS)</scope>
    <scope>SUBUNIT</scope>
    <scope>DISULFIDE BONDS</scope>
</reference>
<reference key="11">
    <citation type="journal article" date="2008" name="Protein Sci.">
        <title>Crystal structure of rhodocytin, a ligand for the platelet-activating receptor CLEC-2.</title>
        <authorList>
            <person name="Watson A.A."/>
            <person name="Eble J.A."/>
            <person name="O'Callaghan C.A."/>
        </authorList>
    </citation>
    <scope>X-RAY CRYSTALLOGRAPHY (2.41 ANGSTROMS)</scope>
    <scope>SUBUNIT</scope>
    <scope>DISULFIDE BONDS</scope>
</reference>
<dbReference type="EMBL" id="AF244900">
    <property type="protein sequence ID" value="AAF79952.1"/>
    <property type="molecule type" value="mRNA"/>
</dbReference>
<dbReference type="PIR" id="PC7027">
    <property type="entry name" value="PC7027"/>
</dbReference>
<dbReference type="PDB" id="2VRP">
    <property type="method" value="X-ray"/>
    <property type="resolution" value="2.41 A"/>
    <property type="chains" value="A=1-136"/>
</dbReference>
<dbReference type="PDB" id="3BX4">
    <property type="method" value="X-ray"/>
    <property type="resolution" value="1.70 A"/>
    <property type="chains" value="A/C=1-136"/>
</dbReference>
<dbReference type="PDB" id="3WWK">
    <property type="method" value="X-ray"/>
    <property type="resolution" value="2.98 A"/>
    <property type="chains" value="A/D/G/J=1-136"/>
</dbReference>
<dbReference type="PDBsum" id="2VRP"/>
<dbReference type="PDBsum" id="3BX4"/>
<dbReference type="PDBsum" id="3WWK"/>
<dbReference type="SMR" id="Q9I841"/>
<dbReference type="DIP" id="DIP-61334N"/>
<dbReference type="IntAct" id="Q9I841">
    <property type="interactions" value="1"/>
</dbReference>
<dbReference type="EvolutionaryTrace" id="Q9I841"/>
<dbReference type="GO" id="GO:0005576">
    <property type="term" value="C:extracellular region"/>
    <property type="evidence" value="ECO:0007669"/>
    <property type="project" value="UniProtKB-SubCell"/>
</dbReference>
<dbReference type="GO" id="GO:0046872">
    <property type="term" value="F:metal ion binding"/>
    <property type="evidence" value="ECO:0007669"/>
    <property type="project" value="UniProtKB-KW"/>
</dbReference>
<dbReference type="GO" id="GO:0090729">
    <property type="term" value="F:toxin activity"/>
    <property type="evidence" value="ECO:0007669"/>
    <property type="project" value="UniProtKB-KW"/>
</dbReference>
<dbReference type="GO" id="GO:0060300">
    <property type="term" value="P:regulation of cytokine activity"/>
    <property type="evidence" value="ECO:0000314"/>
    <property type="project" value="CACAO"/>
</dbReference>
<dbReference type="FunFam" id="3.10.100.10:FF:000087">
    <property type="entry name" value="Snaclec rhodocetin subunit delta"/>
    <property type="match status" value="1"/>
</dbReference>
<dbReference type="Gene3D" id="3.10.100.10">
    <property type="entry name" value="Mannose-Binding Protein A, subunit A"/>
    <property type="match status" value="1"/>
</dbReference>
<dbReference type="InterPro" id="IPR001304">
    <property type="entry name" value="C-type_lectin-like"/>
</dbReference>
<dbReference type="InterPro" id="IPR016186">
    <property type="entry name" value="C-type_lectin-like/link_sf"/>
</dbReference>
<dbReference type="InterPro" id="IPR050111">
    <property type="entry name" value="C-type_lectin/snaclec_domain"/>
</dbReference>
<dbReference type="InterPro" id="IPR018378">
    <property type="entry name" value="C-type_lectin_CS"/>
</dbReference>
<dbReference type="InterPro" id="IPR016187">
    <property type="entry name" value="CTDL_fold"/>
</dbReference>
<dbReference type="PANTHER" id="PTHR22803">
    <property type="entry name" value="MANNOSE, PHOSPHOLIPASE, LECTIN RECEPTOR RELATED"/>
    <property type="match status" value="1"/>
</dbReference>
<dbReference type="Pfam" id="PF00059">
    <property type="entry name" value="Lectin_C"/>
    <property type="match status" value="1"/>
</dbReference>
<dbReference type="SMART" id="SM00034">
    <property type="entry name" value="CLECT"/>
    <property type="match status" value="1"/>
</dbReference>
<dbReference type="SUPFAM" id="SSF56436">
    <property type="entry name" value="C-type lectin-like"/>
    <property type="match status" value="1"/>
</dbReference>
<dbReference type="PROSITE" id="PS00615">
    <property type="entry name" value="C_TYPE_LECTIN_1"/>
    <property type="match status" value="1"/>
</dbReference>
<dbReference type="PROSITE" id="PS50041">
    <property type="entry name" value="C_TYPE_LECTIN_2"/>
    <property type="match status" value="1"/>
</dbReference>
<comment type="function">
    <text evidence="2 3 4 5 6 7 10 11">Elicits platelet aggregation by the binding to the C-type lectin domain family 1 member B (CLEC1B/CLEC2). Binding leads to tyrosine phosphorylation in the cytoplasmic tail of CLEC1B, which promotes the binding of spleen tyrosine kinase (Syk), subsequent activation of PLC-gamma-2, and platelet activation and aggregation. Binding to GPIbalpha (GP1BA) and alpha-2/beta-1 (ITGA2/ITGB1) may also induce aggregation, but this is controversial.</text>
</comment>
<comment type="subunit">
    <text evidence="5 8 9 11">Dimer (non-covalently linked) of heterodimers of subunits alpha and beta (disulfide-linked).</text>
</comment>
<comment type="subcellular location">
    <subcellularLocation>
        <location>Secreted</location>
    </subcellularLocation>
</comment>
<comment type="tissue specificity">
    <text>Expressed by the venom gland.</text>
</comment>
<comment type="similarity">
    <text evidence="12">Belongs to the snaclec family.</text>
</comment>
<feature type="chain" id="PRO_0000355238" description="Snaclec rhodocytin subunit alpha">
    <location>
        <begin position="1"/>
        <end position="136"/>
    </location>
</feature>
<feature type="domain" description="C-type lectin" evidence="1">
    <location>
        <begin position="12"/>
        <end position="132"/>
    </location>
</feature>
<feature type="disulfide bond" evidence="1">
    <location>
        <begin position="5"/>
        <end position="16"/>
    </location>
</feature>
<feature type="disulfide bond" evidence="1">
    <location>
        <begin position="33"/>
        <end position="131"/>
    </location>
</feature>
<feature type="disulfide bond" description="Interchain (with C-98 in beta chain)" evidence="1 8 9">
    <location>
        <position position="83"/>
    </location>
</feature>
<feature type="disulfide bond" evidence="1">
    <location>
        <begin position="106"/>
        <end position="123"/>
    </location>
</feature>
<feature type="strand" evidence="13">
    <location>
        <begin position="10"/>
        <end position="12"/>
    </location>
</feature>
<feature type="strand" evidence="13">
    <location>
        <begin position="15"/>
        <end position="24"/>
    </location>
</feature>
<feature type="helix" evidence="13">
    <location>
        <begin position="26"/>
        <end position="34"/>
    </location>
</feature>
<feature type="turn" evidence="13">
    <location>
        <begin position="37"/>
        <end position="39"/>
    </location>
</feature>
<feature type="helix" evidence="13">
    <location>
        <begin position="48"/>
        <end position="59"/>
    </location>
</feature>
<feature type="helix" evidence="13">
    <location>
        <begin position="62"/>
        <end position="64"/>
    </location>
</feature>
<feature type="strand" evidence="13">
    <location>
        <begin position="69"/>
        <end position="76"/>
    </location>
</feature>
<feature type="strand" evidence="13">
    <location>
        <begin position="80"/>
        <end position="83"/>
    </location>
</feature>
<feature type="strand" evidence="13">
    <location>
        <begin position="106"/>
        <end position="110"/>
    </location>
</feature>
<feature type="helix" evidence="13">
    <location>
        <begin position="111"/>
        <end position="113"/>
    </location>
</feature>
<feature type="turn" evidence="13">
    <location>
        <begin position="114"/>
        <end position="116"/>
    </location>
</feature>
<feature type="strand" evidence="13">
    <location>
        <begin position="117"/>
        <end position="121"/>
    </location>
</feature>
<feature type="strand" evidence="13">
    <location>
        <begin position="127"/>
        <end position="133"/>
    </location>
</feature>
<evidence type="ECO:0000255" key="1">
    <source>
        <dbReference type="PROSITE-ProRule" id="PRU00040"/>
    </source>
</evidence>
<evidence type="ECO:0000269" key="2">
    <source>
    </source>
</evidence>
<evidence type="ECO:0000269" key="3">
    <source>
    </source>
</evidence>
<evidence type="ECO:0000269" key="4">
    <source>
    </source>
</evidence>
<evidence type="ECO:0000269" key="5">
    <source>
    </source>
</evidence>
<evidence type="ECO:0000269" key="6">
    <source>
    </source>
</evidence>
<evidence type="ECO:0000269" key="7">
    <source>
    </source>
</evidence>
<evidence type="ECO:0000269" key="8">
    <source>
    </source>
</evidence>
<evidence type="ECO:0000269" key="9">
    <source>
    </source>
</evidence>
<evidence type="ECO:0000269" key="10">
    <source>
    </source>
</evidence>
<evidence type="ECO:0000269" key="11">
    <source>
    </source>
</evidence>
<evidence type="ECO:0000305" key="12"/>
<evidence type="ECO:0007829" key="13">
    <source>
        <dbReference type="PDB" id="3BX4"/>
    </source>
</evidence>
<name>SLYA_CALRH</name>
<sequence length="136" mass="15796">GLEDCDFGWSPYDQHCYQAFNEQKTWDEAEKFCRAQENGAHLASIESNGEADFVSWLISQKDELADEDYVWIGLRAQNKEQQCSSEWSDGSSVSYENLIDLHTKKCGALEKLTGFRKWVNYYCEQMHAFVCKLLPY</sequence>
<accession>Q9I841</accession>
<proteinExistence type="evidence at protein level"/>
<protein>
    <recommendedName>
        <fullName>Snaclec rhodocytin subunit alpha</fullName>
    </recommendedName>
    <alternativeName>
        <fullName>Aggretin alpha chain</fullName>
    </alternativeName>
    <alternativeName>
        <fullName>Rhodoaggretin subunit alpha</fullName>
    </alternativeName>
</protein>
<organism>
    <name type="scientific">Calloselasma rhodostoma</name>
    <name type="common">Malayan pit viper</name>
    <name type="synonym">Agkistrodon rhodostoma</name>
    <dbReference type="NCBI Taxonomy" id="8717"/>
    <lineage>
        <taxon>Eukaryota</taxon>
        <taxon>Metazoa</taxon>
        <taxon>Chordata</taxon>
        <taxon>Craniata</taxon>
        <taxon>Vertebrata</taxon>
        <taxon>Euteleostomi</taxon>
        <taxon>Lepidosauria</taxon>
        <taxon>Squamata</taxon>
        <taxon>Bifurcata</taxon>
        <taxon>Unidentata</taxon>
        <taxon>Episquamata</taxon>
        <taxon>Toxicofera</taxon>
        <taxon>Serpentes</taxon>
        <taxon>Colubroidea</taxon>
        <taxon>Viperidae</taxon>
        <taxon>Crotalinae</taxon>
        <taxon>Calloselasma</taxon>
    </lineage>
</organism>
<keyword id="KW-0002">3D-structure</keyword>
<keyword id="KW-0903">Direct protein sequencing</keyword>
<keyword id="KW-1015">Disulfide bond</keyword>
<keyword id="KW-1199">Hemostasis impairing toxin</keyword>
<keyword id="KW-0479">Metal-binding</keyword>
<keyword id="KW-1202">Platelet aggregation activating toxin</keyword>
<keyword id="KW-0964">Secreted</keyword>
<keyword id="KW-0800">Toxin</keyword>